<evidence type="ECO:0000255" key="1">
    <source>
        <dbReference type="HAMAP-Rule" id="MF_00171"/>
    </source>
</evidence>
<keyword id="KW-0413">Isomerase</keyword>
<keyword id="KW-0819">tRNA processing</keyword>
<gene>
    <name evidence="1" type="primary">truA</name>
    <name type="ordered locus">P9303_23281</name>
</gene>
<comment type="function">
    <text evidence="1">Formation of pseudouridine at positions 38, 39 and 40 in the anticodon stem and loop of transfer RNAs.</text>
</comment>
<comment type="catalytic activity">
    <reaction evidence="1">
        <text>uridine(38/39/40) in tRNA = pseudouridine(38/39/40) in tRNA</text>
        <dbReference type="Rhea" id="RHEA:22376"/>
        <dbReference type="Rhea" id="RHEA-COMP:10085"/>
        <dbReference type="Rhea" id="RHEA-COMP:10087"/>
        <dbReference type="ChEBI" id="CHEBI:65314"/>
        <dbReference type="ChEBI" id="CHEBI:65315"/>
        <dbReference type="EC" id="5.4.99.12"/>
    </reaction>
</comment>
<comment type="subunit">
    <text evidence="1">Homodimer.</text>
</comment>
<comment type="similarity">
    <text evidence="1">Belongs to the tRNA pseudouridine synthase TruA family.</text>
</comment>
<proteinExistence type="inferred from homology"/>
<protein>
    <recommendedName>
        <fullName evidence="1">tRNA pseudouridine synthase A</fullName>
        <ecNumber evidence="1">5.4.99.12</ecNumber>
    </recommendedName>
    <alternativeName>
        <fullName evidence="1">tRNA pseudouridine(38-40) synthase</fullName>
    </alternativeName>
    <alternativeName>
        <fullName evidence="1">tRNA pseudouridylate synthase I</fullName>
    </alternativeName>
    <alternativeName>
        <fullName evidence="1">tRNA-uridine isomerase I</fullName>
    </alternativeName>
</protein>
<accession>A2CC53</accession>
<feature type="chain" id="PRO_1000017137" description="tRNA pseudouridine synthase A">
    <location>
        <begin position="1"/>
        <end position="295"/>
    </location>
</feature>
<feature type="active site" description="Nucleophile" evidence="1">
    <location>
        <position position="67"/>
    </location>
</feature>
<feature type="binding site" evidence="1">
    <location>
        <position position="125"/>
    </location>
    <ligand>
        <name>substrate</name>
    </ligand>
</feature>
<dbReference type="EC" id="5.4.99.12" evidence="1"/>
<dbReference type="EMBL" id="CP000554">
    <property type="protein sequence ID" value="ABM79063.1"/>
    <property type="molecule type" value="Genomic_DNA"/>
</dbReference>
<dbReference type="RefSeq" id="WP_011826928.1">
    <property type="nucleotide sequence ID" value="NC_008820.1"/>
</dbReference>
<dbReference type="SMR" id="A2CC53"/>
<dbReference type="STRING" id="59922.P9303_23281"/>
<dbReference type="KEGG" id="pmf:P9303_23281"/>
<dbReference type="HOGENOM" id="CLU_014673_0_1_3"/>
<dbReference type="BioCyc" id="PMAR59922:G1G80-2044-MONOMER"/>
<dbReference type="Proteomes" id="UP000002274">
    <property type="component" value="Chromosome"/>
</dbReference>
<dbReference type="GO" id="GO:0003723">
    <property type="term" value="F:RNA binding"/>
    <property type="evidence" value="ECO:0007669"/>
    <property type="project" value="InterPro"/>
</dbReference>
<dbReference type="GO" id="GO:0160147">
    <property type="term" value="F:tRNA pseudouridine(38-40) synthase activity"/>
    <property type="evidence" value="ECO:0007669"/>
    <property type="project" value="UniProtKB-EC"/>
</dbReference>
<dbReference type="GO" id="GO:0031119">
    <property type="term" value="P:tRNA pseudouridine synthesis"/>
    <property type="evidence" value="ECO:0007669"/>
    <property type="project" value="UniProtKB-UniRule"/>
</dbReference>
<dbReference type="CDD" id="cd02570">
    <property type="entry name" value="PseudoU_synth_EcTruA"/>
    <property type="match status" value="1"/>
</dbReference>
<dbReference type="FunFam" id="3.30.70.580:FF:000001">
    <property type="entry name" value="tRNA pseudouridine synthase A"/>
    <property type="match status" value="1"/>
</dbReference>
<dbReference type="Gene3D" id="3.30.70.660">
    <property type="entry name" value="Pseudouridine synthase I, catalytic domain, C-terminal subdomain"/>
    <property type="match status" value="1"/>
</dbReference>
<dbReference type="Gene3D" id="3.30.70.580">
    <property type="entry name" value="Pseudouridine synthase I, catalytic domain, N-terminal subdomain"/>
    <property type="match status" value="1"/>
</dbReference>
<dbReference type="HAMAP" id="MF_00171">
    <property type="entry name" value="TruA"/>
    <property type="match status" value="1"/>
</dbReference>
<dbReference type="InterPro" id="IPR020103">
    <property type="entry name" value="PsdUridine_synth_cat_dom_sf"/>
</dbReference>
<dbReference type="InterPro" id="IPR001406">
    <property type="entry name" value="PsdUridine_synth_TruA"/>
</dbReference>
<dbReference type="InterPro" id="IPR020097">
    <property type="entry name" value="PsdUridine_synth_TruA_a/b_dom"/>
</dbReference>
<dbReference type="InterPro" id="IPR020095">
    <property type="entry name" value="PsdUridine_synth_TruA_C"/>
</dbReference>
<dbReference type="InterPro" id="IPR020094">
    <property type="entry name" value="TruA/RsuA/RluB/E/F_N"/>
</dbReference>
<dbReference type="NCBIfam" id="TIGR00071">
    <property type="entry name" value="hisT_truA"/>
    <property type="match status" value="1"/>
</dbReference>
<dbReference type="PANTHER" id="PTHR11142">
    <property type="entry name" value="PSEUDOURIDYLATE SYNTHASE"/>
    <property type="match status" value="1"/>
</dbReference>
<dbReference type="PANTHER" id="PTHR11142:SF0">
    <property type="entry name" value="TRNA PSEUDOURIDINE SYNTHASE-LIKE 1"/>
    <property type="match status" value="1"/>
</dbReference>
<dbReference type="Pfam" id="PF01416">
    <property type="entry name" value="PseudoU_synth_1"/>
    <property type="match status" value="2"/>
</dbReference>
<dbReference type="PIRSF" id="PIRSF001430">
    <property type="entry name" value="tRNA_psdUrid_synth"/>
    <property type="match status" value="1"/>
</dbReference>
<dbReference type="SUPFAM" id="SSF55120">
    <property type="entry name" value="Pseudouridine synthase"/>
    <property type="match status" value="1"/>
</dbReference>
<sequence>MFPNSKVELPKSTPVRRIGLSVQYEGSNFCGWQRQPQAVSVQQVLEEAISQLDPQRPIQAVAAGRTDAGVHAAGQVVHFDCCGPIPAERWAPALNGRLPNTIRVREAVARPASWHACHSATYRRYRYTIYNGRRPNLFLTPWSWHRYHVRLDETVMQVALEGLLGLQDLSAFQRTGSRRAHARTTVQDVKIERQGDLIMIEIQASGFLYGMVRLLMGQLVALGEHRLNLQTFERRWKEKRRQEVKEAAPAQGLCLLRAGYEEDIFSKGGWYDCQPRYSLGANDPPLDPPSAPESS</sequence>
<reference key="1">
    <citation type="journal article" date="2007" name="PLoS Genet.">
        <title>Patterns and implications of gene gain and loss in the evolution of Prochlorococcus.</title>
        <authorList>
            <person name="Kettler G.C."/>
            <person name="Martiny A.C."/>
            <person name="Huang K."/>
            <person name="Zucker J."/>
            <person name="Coleman M.L."/>
            <person name="Rodrigue S."/>
            <person name="Chen F."/>
            <person name="Lapidus A."/>
            <person name="Ferriera S."/>
            <person name="Johnson J."/>
            <person name="Steglich C."/>
            <person name="Church G.M."/>
            <person name="Richardson P."/>
            <person name="Chisholm S.W."/>
        </authorList>
    </citation>
    <scope>NUCLEOTIDE SEQUENCE [LARGE SCALE GENOMIC DNA]</scope>
    <source>
        <strain>MIT 9303</strain>
    </source>
</reference>
<organism>
    <name type="scientific">Prochlorococcus marinus (strain MIT 9303)</name>
    <dbReference type="NCBI Taxonomy" id="59922"/>
    <lineage>
        <taxon>Bacteria</taxon>
        <taxon>Bacillati</taxon>
        <taxon>Cyanobacteriota</taxon>
        <taxon>Cyanophyceae</taxon>
        <taxon>Synechococcales</taxon>
        <taxon>Prochlorococcaceae</taxon>
        <taxon>Prochlorococcus</taxon>
    </lineage>
</organism>
<name>TRUA_PROM3</name>